<protein>
    <recommendedName>
        <fullName evidence="2">Elongation factor Tu</fullName>
        <shortName evidence="2">EF-Tu</shortName>
        <ecNumber evidence="2">3.6.5.3</ecNumber>
    </recommendedName>
</protein>
<reference key="1">
    <citation type="submission" date="2006-09" db="EMBL/GenBank/DDBJ databases">
        <title>Complete sequence of chromosome 1 of Shewanella sp. ANA-3.</title>
        <authorList>
            <person name="Copeland A."/>
            <person name="Lucas S."/>
            <person name="Lapidus A."/>
            <person name="Barry K."/>
            <person name="Detter J.C."/>
            <person name="Glavina del Rio T."/>
            <person name="Hammon N."/>
            <person name="Israni S."/>
            <person name="Dalin E."/>
            <person name="Tice H."/>
            <person name="Pitluck S."/>
            <person name="Chertkov O."/>
            <person name="Brettin T."/>
            <person name="Bruce D."/>
            <person name="Han C."/>
            <person name="Tapia R."/>
            <person name="Gilna P."/>
            <person name="Schmutz J."/>
            <person name="Larimer F."/>
            <person name="Land M."/>
            <person name="Hauser L."/>
            <person name="Kyrpides N."/>
            <person name="Kim E."/>
            <person name="Newman D."/>
            <person name="Salticov C."/>
            <person name="Konstantinidis K."/>
            <person name="Klappenback J."/>
            <person name="Tiedje J."/>
            <person name="Richardson P."/>
        </authorList>
    </citation>
    <scope>NUCLEOTIDE SEQUENCE [LARGE SCALE GENOMIC DNA]</scope>
    <source>
        <strain>ANA-3</strain>
    </source>
</reference>
<gene>
    <name evidence="2" type="primary">tuf1</name>
    <name type="ordered locus">Shewana3_0185</name>
    <name type="ordered locus">Shewana3_0197</name>
</gene>
<name>EFTU_SHESA</name>
<accession>A0KRL0</accession>
<organism>
    <name type="scientific">Shewanella sp. (strain ANA-3)</name>
    <dbReference type="NCBI Taxonomy" id="94122"/>
    <lineage>
        <taxon>Bacteria</taxon>
        <taxon>Pseudomonadati</taxon>
        <taxon>Pseudomonadota</taxon>
        <taxon>Gammaproteobacteria</taxon>
        <taxon>Alteromonadales</taxon>
        <taxon>Shewanellaceae</taxon>
        <taxon>Shewanella</taxon>
    </lineage>
</organism>
<sequence>MAKAKFERNKPHVNVGTIGHVDHGKTTLTAAISHVLAKTYGGEAKDFSQIDNAPEERERGITINTSHIEYDTPTRHYAHVDCPGHADYVKNMITGAAQMDGAILVVASTDGPMPQTREHILLSRQVGVPFIIVFMNKCDMVDDAELLELVEMEVRELLSEYDFPGDDLPVIQGSALKALEGEPEWEAKIIELAAALDSYIPEPERDIDKPFLMPIEDVFSISGRGTVVTGRVERGIVRVGDEVEIVGIRATTKTTCTGVEMFRKLLDEGRAGENCGILLRGTKRDDVERGQVLSKPGSINPHTTFESEVYVLSKEEGGRHTPFFKGYRPQFYFRTTDVTGTIELPEGVEMVMPGDNIKMKVTLICPIAMDEGLRFAIREGGRTVGAGVVAKIFA</sequence>
<dbReference type="EC" id="3.6.5.3" evidence="2"/>
<dbReference type="EMBL" id="CP000469">
    <property type="protein sequence ID" value="ABK46429.1"/>
    <property type="molecule type" value="Genomic_DNA"/>
</dbReference>
<dbReference type="EMBL" id="CP000469">
    <property type="protein sequence ID" value="ABK46441.1"/>
    <property type="molecule type" value="Genomic_DNA"/>
</dbReference>
<dbReference type="SMR" id="A0KRL0"/>
<dbReference type="STRING" id="94122.Shewana3_0185"/>
<dbReference type="KEGG" id="shn:Shewana3_0185"/>
<dbReference type="KEGG" id="shn:Shewana3_0197"/>
<dbReference type="eggNOG" id="COG0050">
    <property type="taxonomic scope" value="Bacteria"/>
</dbReference>
<dbReference type="HOGENOM" id="CLU_007265_0_1_6"/>
<dbReference type="OrthoDB" id="9803139at2"/>
<dbReference type="Proteomes" id="UP000002589">
    <property type="component" value="Chromosome"/>
</dbReference>
<dbReference type="GO" id="GO:0005829">
    <property type="term" value="C:cytosol"/>
    <property type="evidence" value="ECO:0007669"/>
    <property type="project" value="TreeGrafter"/>
</dbReference>
<dbReference type="GO" id="GO:0005525">
    <property type="term" value="F:GTP binding"/>
    <property type="evidence" value="ECO:0007669"/>
    <property type="project" value="UniProtKB-UniRule"/>
</dbReference>
<dbReference type="GO" id="GO:0003924">
    <property type="term" value="F:GTPase activity"/>
    <property type="evidence" value="ECO:0007669"/>
    <property type="project" value="InterPro"/>
</dbReference>
<dbReference type="GO" id="GO:0097216">
    <property type="term" value="F:guanosine tetraphosphate binding"/>
    <property type="evidence" value="ECO:0007669"/>
    <property type="project" value="UniProtKB-ARBA"/>
</dbReference>
<dbReference type="GO" id="GO:0003746">
    <property type="term" value="F:translation elongation factor activity"/>
    <property type="evidence" value="ECO:0007669"/>
    <property type="project" value="UniProtKB-UniRule"/>
</dbReference>
<dbReference type="CDD" id="cd01884">
    <property type="entry name" value="EF_Tu"/>
    <property type="match status" value="1"/>
</dbReference>
<dbReference type="CDD" id="cd03697">
    <property type="entry name" value="EFTU_II"/>
    <property type="match status" value="1"/>
</dbReference>
<dbReference type="CDD" id="cd03707">
    <property type="entry name" value="EFTU_III"/>
    <property type="match status" value="1"/>
</dbReference>
<dbReference type="FunFam" id="2.40.30.10:FF:000001">
    <property type="entry name" value="Elongation factor Tu"/>
    <property type="match status" value="1"/>
</dbReference>
<dbReference type="FunFam" id="3.40.50.300:FF:000003">
    <property type="entry name" value="Elongation factor Tu"/>
    <property type="match status" value="1"/>
</dbReference>
<dbReference type="Gene3D" id="3.40.50.300">
    <property type="entry name" value="P-loop containing nucleotide triphosphate hydrolases"/>
    <property type="match status" value="1"/>
</dbReference>
<dbReference type="Gene3D" id="2.40.30.10">
    <property type="entry name" value="Translation factors"/>
    <property type="match status" value="2"/>
</dbReference>
<dbReference type="HAMAP" id="MF_00118_B">
    <property type="entry name" value="EF_Tu_B"/>
    <property type="match status" value="1"/>
</dbReference>
<dbReference type="InterPro" id="IPR041709">
    <property type="entry name" value="EF-Tu_GTP-bd"/>
</dbReference>
<dbReference type="InterPro" id="IPR050055">
    <property type="entry name" value="EF-Tu_GTPase"/>
</dbReference>
<dbReference type="InterPro" id="IPR004161">
    <property type="entry name" value="EFTu-like_2"/>
</dbReference>
<dbReference type="InterPro" id="IPR033720">
    <property type="entry name" value="EFTU_2"/>
</dbReference>
<dbReference type="InterPro" id="IPR031157">
    <property type="entry name" value="G_TR_CS"/>
</dbReference>
<dbReference type="InterPro" id="IPR027417">
    <property type="entry name" value="P-loop_NTPase"/>
</dbReference>
<dbReference type="InterPro" id="IPR005225">
    <property type="entry name" value="Small_GTP-bd"/>
</dbReference>
<dbReference type="InterPro" id="IPR000795">
    <property type="entry name" value="T_Tr_GTP-bd_dom"/>
</dbReference>
<dbReference type="InterPro" id="IPR009000">
    <property type="entry name" value="Transl_B-barrel_sf"/>
</dbReference>
<dbReference type="InterPro" id="IPR009001">
    <property type="entry name" value="Transl_elong_EF1A/Init_IF2_C"/>
</dbReference>
<dbReference type="InterPro" id="IPR004541">
    <property type="entry name" value="Transl_elong_EFTu/EF1A_bac/org"/>
</dbReference>
<dbReference type="InterPro" id="IPR004160">
    <property type="entry name" value="Transl_elong_EFTu/EF1A_C"/>
</dbReference>
<dbReference type="NCBIfam" id="TIGR00485">
    <property type="entry name" value="EF-Tu"/>
    <property type="match status" value="1"/>
</dbReference>
<dbReference type="NCBIfam" id="NF000766">
    <property type="entry name" value="PRK00049.1"/>
    <property type="match status" value="1"/>
</dbReference>
<dbReference type="NCBIfam" id="NF009372">
    <property type="entry name" value="PRK12735.1"/>
    <property type="match status" value="1"/>
</dbReference>
<dbReference type="NCBIfam" id="NF009373">
    <property type="entry name" value="PRK12736.1"/>
    <property type="match status" value="1"/>
</dbReference>
<dbReference type="NCBIfam" id="TIGR00231">
    <property type="entry name" value="small_GTP"/>
    <property type="match status" value="1"/>
</dbReference>
<dbReference type="PANTHER" id="PTHR43721:SF22">
    <property type="entry name" value="ELONGATION FACTOR TU, MITOCHONDRIAL"/>
    <property type="match status" value="1"/>
</dbReference>
<dbReference type="PANTHER" id="PTHR43721">
    <property type="entry name" value="ELONGATION FACTOR TU-RELATED"/>
    <property type="match status" value="1"/>
</dbReference>
<dbReference type="Pfam" id="PF00009">
    <property type="entry name" value="GTP_EFTU"/>
    <property type="match status" value="1"/>
</dbReference>
<dbReference type="Pfam" id="PF03144">
    <property type="entry name" value="GTP_EFTU_D2"/>
    <property type="match status" value="1"/>
</dbReference>
<dbReference type="Pfam" id="PF03143">
    <property type="entry name" value="GTP_EFTU_D3"/>
    <property type="match status" value="1"/>
</dbReference>
<dbReference type="PRINTS" id="PR00315">
    <property type="entry name" value="ELONGATNFCT"/>
</dbReference>
<dbReference type="SUPFAM" id="SSF50465">
    <property type="entry name" value="EF-Tu/eEF-1alpha/eIF2-gamma C-terminal domain"/>
    <property type="match status" value="1"/>
</dbReference>
<dbReference type="SUPFAM" id="SSF52540">
    <property type="entry name" value="P-loop containing nucleoside triphosphate hydrolases"/>
    <property type="match status" value="1"/>
</dbReference>
<dbReference type="SUPFAM" id="SSF50447">
    <property type="entry name" value="Translation proteins"/>
    <property type="match status" value="1"/>
</dbReference>
<dbReference type="PROSITE" id="PS00301">
    <property type="entry name" value="G_TR_1"/>
    <property type="match status" value="1"/>
</dbReference>
<dbReference type="PROSITE" id="PS51722">
    <property type="entry name" value="G_TR_2"/>
    <property type="match status" value="1"/>
</dbReference>
<feature type="chain" id="PRO_0000337533" description="Elongation factor Tu">
    <location>
        <begin position="1"/>
        <end position="394"/>
    </location>
</feature>
<feature type="domain" description="tr-type G">
    <location>
        <begin position="10"/>
        <end position="204"/>
    </location>
</feature>
<feature type="region of interest" description="G1" evidence="1">
    <location>
        <begin position="19"/>
        <end position="26"/>
    </location>
</feature>
<feature type="region of interest" description="G2" evidence="1">
    <location>
        <begin position="60"/>
        <end position="64"/>
    </location>
</feature>
<feature type="region of interest" description="G3" evidence="1">
    <location>
        <begin position="81"/>
        <end position="84"/>
    </location>
</feature>
<feature type="region of interest" description="G4" evidence="1">
    <location>
        <begin position="136"/>
        <end position="139"/>
    </location>
</feature>
<feature type="region of interest" description="G5" evidence="1">
    <location>
        <begin position="174"/>
        <end position="176"/>
    </location>
</feature>
<feature type="binding site" evidence="2">
    <location>
        <begin position="19"/>
        <end position="26"/>
    </location>
    <ligand>
        <name>GTP</name>
        <dbReference type="ChEBI" id="CHEBI:37565"/>
    </ligand>
</feature>
<feature type="binding site" evidence="2">
    <location>
        <position position="26"/>
    </location>
    <ligand>
        <name>Mg(2+)</name>
        <dbReference type="ChEBI" id="CHEBI:18420"/>
    </ligand>
</feature>
<feature type="binding site" evidence="2">
    <location>
        <begin position="81"/>
        <end position="85"/>
    </location>
    <ligand>
        <name>GTP</name>
        <dbReference type="ChEBI" id="CHEBI:37565"/>
    </ligand>
</feature>
<feature type="binding site" evidence="2">
    <location>
        <begin position="136"/>
        <end position="139"/>
    </location>
    <ligand>
        <name>GTP</name>
        <dbReference type="ChEBI" id="CHEBI:37565"/>
    </ligand>
</feature>
<comment type="function">
    <text evidence="2">GTP hydrolase that promotes the GTP-dependent binding of aminoacyl-tRNA to the A-site of ribosomes during protein biosynthesis.</text>
</comment>
<comment type="catalytic activity">
    <reaction evidence="2">
        <text>GTP + H2O = GDP + phosphate + H(+)</text>
        <dbReference type="Rhea" id="RHEA:19669"/>
        <dbReference type="ChEBI" id="CHEBI:15377"/>
        <dbReference type="ChEBI" id="CHEBI:15378"/>
        <dbReference type="ChEBI" id="CHEBI:37565"/>
        <dbReference type="ChEBI" id="CHEBI:43474"/>
        <dbReference type="ChEBI" id="CHEBI:58189"/>
        <dbReference type="EC" id="3.6.5.3"/>
    </reaction>
    <physiologicalReaction direction="left-to-right" evidence="2">
        <dbReference type="Rhea" id="RHEA:19670"/>
    </physiologicalReaction>
</comment>
<comment type="subunit">
    <text evidence="2">Monomer.</text>
</comment>
<comment type="subcellular location">
    <subcellularLocation>
        <location evidence="2">Cytoplasm</location>
    </subcellularLocation>
</comment>
<comment type="similarity">
    <text evidence="2">Belongs to the TRAFAC class translation factor GTPase superfamily. Classic translation factor GTPase family. EF-Tu/EF-1A subfamily.</text>
</comment>
<evidence type="ECO:0000250" key="1"/>
<evidence type="ECO:0000255" key="2">
    <source>
        <dbReference type="HAMAP-Rule" id="MF_00118"/>
    </source>
</evidence>
<proteinExistence type="inferred from homology"/>
<keyword id="KW-0963">Cytoplasm</keyword>
<keyword id="KW-0251">Elongation factor</keyword>
<keyword id="KW-0342">GTP-binding</keyword>
<keyword id="KW-0378">Hydrolase</keyword>
<keyword id="KW-0460">Magnesium</keyword>
<keyword id="KW-0479">Metal-binding</keyword>
<keyword id="KW-0547">Nucleotide-binding</keyword>
<keyword id="KW-0648">Protein biosynthesis</keyword>